<comment type="catalytic activity">
    <reaction evidence="1">
        <text>tRNA(Gly) + glycine + ATP = glycyl-tRNA(Gly) + AMP + diphosphate</text>
        <dbReference type="Rhea" id="RHEA:16013"/>
        <dbReference type="Rhea" id="RHEA-COMP:9664"/>
        <dbReference type="Rhea" id="RHEA-COMP:9683"/>
        <dbReference type="ChEBI" id="CHEBI:30616"/>
        <dbReference type="ChEBI" id="CHEBI:33019"/>
        <dbReference type="ChEBI" id="CHEBI:57305"/>
        <dbReference type="ChEBI" id="CHEBI:78442"/>
        <dbReference type="ChEBI" id="CHEBI:78522"/>
        <dbReference type="ChEBI" id="CHEBI:456215"/>
        <dbReference type="EC" id="6.1.1.14"/>
    </reaction>
</comment>
<comment type="subunit">
    <text evidence="1">Tetramer of two alpha and two beta subunits.</text>
</comment>
<comment type="subcellular location">
    <subcellularLocation>
        <location evidence="1">Cytoplasm</location>
    </subcellularLocation>
</comment>
<comment type="similarity">
    <text evidence="1">Belongs to the class-II aminoacyl-tRNA synthetase family.</text>
</comment>
<accession>C5CM90</accession>
<gene>
    <name evidence="1" type="primary">glyQ</name>
    <name type="ordered locus">Vapar_4744</name>
</gene>
<keyword id="KW-0030">Aminoacyl-tRNA synthetase</keyword>
<keyword id="KW-0067">ATP-binding</keyword>
<keyword id="KW-0963">Cytoplasm</keyword>
<keyword id="KW-0436">Ligase</keyword>
<keyword id="KW-0547">Nucleotide-binding</keyword>
<keyword id="KW-0648">Protein biosynthesis</keyword>
<name>SYGA_VARPS</name>
<feature type="chain" id="PRO_1000204598" description="Glycine--tRNA ligase alpha subunit">
    <location>
        <begin position="1"/>
        <end position="301"/>
    </location>
</feature>
<proteinExistence type="inferred from homology"/>
<reference key="1">
    <citation type="journal article" date="2011" name="J. Bacteriol.">
        <title>Complete genome sequence of the metabolically versatile plant growth-promoting endophyte, Variovorax paradoxus S110.</title>
        <authorList>
            <person name="Han J.I."/>
            <person name="Choi H.K."/>
            <person name="Lee S.W."/>
            <person name="Orwin P.M."/>
            <person name="Kim J."/>
            <person name="Laroe S.L."/>
            <person name="Kim T.G."/>
            <person name="O'Neil J."/>
            <person name="Leadbetter J.R."/>
            <person name="Lee S.Y."/>
            <person name="Hur C.G."/>
            <person name="Spain J.C."/>
            <person name="Ovchinnikova G."/>
            <person name="Goodwin L."/>
            <person name="Han C."/>
        </authorList>
    </citation>
    <scope>NUCLEOTIDE SEQUENCE [LARGE SCALE GENOMIC DNA]</scope>
    <source>
        <strain>S110</strain>
    </source>
</reference>
<protein>
    <recommendedName>
        <fullName evidence="1">Glycine--tRNA ligase alpha subunit</fullName>
        <ecNumber evidence="1">6.1.1.14</ecNumber>
    </recommendedName>
    <alternativeName>
        <fullName evidence="1">Glycyl-tRNA synthetase alpha subunit</fullName>
        <shortName evidence="1">GlyRS</shortName>
    </alternativeName>
</protein>
<dbReference type="EC" id="6.1.1.14" evidence="1"/>
<dbReference type="EMBL" id="CP001635">
    <property type="protein sequence ID" value="ACS21349.1"/>
    <property type="molecule type" value="Genomic_DNA"/>
</dbReference>
<dbReference type="SMR" id="C5CM90"/>
<dbReference type="STRING" id="543728.Vapar_4744"/>
<dbReference type="KEGG" id="vap:Vapar_4744"/>
<dbReference type="eggNOG" id="COG0752">
    <property type="taxonomic scope" value="Bacteria"/>
</dbReference>
<dbReference type="HOGENOM" id="CLU_057066_1_0_4"/>
<dbReference type="OrthoDB" id="9802183at2"/>
<dbReference type="GO" id="GO:0005829">
    <property type="term" value="C:cytosol"/>
    <property type="evidence" value="ECO:0007669"/>
    <property type="project" value="TreeGrafter"/>
</dbReference>
<dbReference type="GO" id="GO:0005524">
    <property type="term" value="F:ATP binding"/>
    <property type="evidence" value="ECO:0007669"/>
    <property type="project" value="UniProtKB-UniRule"/>
</dbReference>
<dbReference type="GO" id="GO:0004820">
    <property type="term" value="F:glycine-tRNA ligase activity"/>
    <property type="evidence" value="ECO:0007669"/>
    <property type="project" value="UniProtKB-UniRule"/>
</dbReference>
<dbReference type="GO" id="GO:0006426">
    <property type="term" value="P:glycyl-tRNA aminoacylation"/>
    <property type="evidence" value="ECO:0007669"/>
    <property type="project" value="UniProtKB-UniRule"/>
</dbReference>
<dbReference type="CDD" id="cd00733">
    <property type="entry name" value="GlyRS_alpha_core"/>
    <property type="match status" value="1"/>
</dbReference>
<dbReference type="FunFam" id="3.30.930.10:FF:000006">
    <property type="entry name" value="Glycine--tRNA ligase alpha subunit"/>
    <property type="match status" value="1"/>
</dbReference>
<dbReference type="Gene3D" id="3.30.930.10">
    <property type="entry name" value="Bira Bifunctional Protein, Domain 2"/>
    <property type="match status" value="1"/>
</dbReference>
<dbReference type="Gene3D" id="1.20.58.180">
    <property type="entry name" value="Class II aaRS and biotin synthetases, domain 2"/>
    <property type="match status" value="1"/>
</dbReference>
<dbReference type="HAMAP" id="MF_00254">
    <property type="entry name" value="Gly_tRNA_synth_alpha"/>
    <property type="match status" value="1"/>
</dbReference>
<dbReference type="InterPro" id="IPR045864">
    <property type="entry name" value="aa-tRNA-synth_II/BPL/LPL"/>
</dbReference>
<dbReference type="InterPro" id="IPR006194">
    <property type="entry name" value="Gly-tRNA-synth_heterodimer"/>
</dbReference>
<dbReference type="InterPro" id="IPR002310">
    <property type="entry name" value="Gly-tRNA_ligase_asu"/>
</dbReference>
<dbReference type="NCBIfam" id="TIGR00388">
    <property type="entry name" value="glyQ"/>
    <property type="match status" value="1"/>
</dbReference>
<dbReference type="NCBIfam" id="NF006827">
    <property type="entry name" value="PRK09348.1"/>
    <property type="match status" value="1"/>
</dbReference>
<dbReference type="PANTHER" id="PTHR30075:SF2">
    <property type="entry name" value="GLYCINE--TRNA LIGASE, CHLOROPLASTIC_MITOCHONDRIAL 2"/>
    <property type="match status" value="1"/>
</dbReference>
<dbReference type="PANTHER" id="PTHR30075">
    <property type="entry name" value="GLYCYL-TRNA SYNTHETASE"/>
    <property type="match status" value="1"/>
</dbReference>
<dbReference type="Pfam" id="PF02091">
    <property type="entry name" value="tRNA-synt_2e"/>
    <property type="match status" value="1"/>
</dbReference>
<dbReference type="PRINTS" id="PR01044">
    <property type="entry name" value="TRNASYNTHGA"/>
</dbReference>
<dbReference type="SUPFAM" id="SSF55681">
    <property type="entry name" value="Class II aaRS and biotin synthetases"/>
    <property type="match status" value="1"/>
</dbReference>
<dbReference type="PROSITE" id="PS50861">
    <property type="entry name" value="AA_TRNA_LIGASE_II_GLYAB"/>
    <property type="match status" value="1"/>
</dbReference>
<evidence type="ECO:0000255" key="1">
    <source>
        <dbReference type="HAMAP-Rule" id="MF_00254"/>
    </source>
</evidence>
<sequence length="301" mass="34347">MLTFQQIILKLQSYWADKGCALLQPYDMEVGAGTSHTATFLRALGPEPWKAAYVQPSRRPKDGRYGENPNRLQHYYQYQVVLKPAPSNILELYLGSLEALGFDLKKNDIRFVEDDWENPTLGAWGLGWEVWLNGMEVTQFTYFQQVGGIDCKPITGEITYGLERLAMYLQGVDNVYNLTWTDGLSYGDVYKQNEVEQSTYNFEHSDAEFLFTAFAAHEKQARHLMTEQLALPAYEQVLKAAHSFNLLDARGAISVTERAAYIGRIRNLARSVAQSYYESRQRLGFPMAPREWVAQITKKAA</sequence>
<organism>
    <name type="scientific">Variovorax paradoxus (strain S110)</name>
    <dbReference type="NCBI Taxonomy" id="543728"/>
    <lineage>
        <taxon>Bacteria</taxon>
        <taxon>Pseudomonadati</taxon>
        <taxon>Pseudomonadota</taxon>
        <taxon>Betaproteobacteria</taxon>
        <taxon>Burkholderiales</taxon>
        <taxon>Comamonadaceae</taxon>
        <taxon>Variovorax</taxon>
    </lineage>
</organism>